<feature type="chain" id="PRO_1000122370" description="Large ribosomal subunit protein bL20">
    <location>
        <begin position="1"/>
        <end position="118"/>
    </location>
</feature>
<gene>
    <name evidence="1" type="primary">rplT</name>
    <name type="ordered locus">SeSA_A1431</name>
</gene>
<comment type="function">
    <text evidence="1">Binds directly to 23S ribosomal RNA and is necessary for the in vitro assembly process of the 50S ribosomal subunit. It is not involved in the protein synthesizing functions of that subunit.</text>
</comment>
<comment type="similarity">
    <text evidence="1">Belongs to the bacterial ribosomal protein bL20 family.</text>
</comment>
<reference key="1">
    <citation type="journal article" date="2011" name="J. Bacteriol.">
        <title>Comparative genomics of 28 Salmonella enterica isolates: evidence for CRISPR-mediated adaptive sublineage evolution.</title>
        <authorList>
            <person name="Fricke W.F."/>
            <person name="Mammel M.K."/>
            <person name="McDermott P.F."/>
            <person name="Tartera C."/>
            <person name="White D.G."/>
            <person name="Leclerc J.E."/>
            <person name="Ravel J."/>
            <person name="Cebula T.A."/>
        </authorList>
    </citation>
    <scope>NUCLEOTIDE SEQUENCE [LARGE SCALE GENOMIC DNA]</scope>
    <source>
        <strain>CVM19633</strain>
    </source>
</reference>
<accession>B4TUF3</accession>
<dbReference type="EMBL" id="CP001127">
    <property type="protein sequence ID" value="ACF88634.1"/>
    <property type="molecule type" value="Genomic_DNA"/>
</dbReference>
<dbReference type="RefSeq" id="WP_000124850.1">
    <property type="nucleotide sequence ID" value="NC_011094.1"/>
</dbReference>
<dbReference type="SMR" id="B4TUF3"/>
<dbReference type="GeneID" id="98388757"/>
<dbReference type="KEGG" id="sew:SeSA_A1431"/>
<dbReference type="HOGENOM" id="CLU_123265_0_1_6"/>
<dbReference type="Proteomes" id="UP000001865">
    <property type="component" value="Chromosome"/>
</dbReference>
<dbReference type="GO" id="GO:1990904">
    <property type="term" value="C:ribonucleoprotein complex"/>
    <property type="evidence" value="ECO:0007669"/>
    <property type="project" value="UniProtKB-KW"/>
</dbReference>
<dbReference type="GO" id="GO:0005840">
    <property type="term" value="C:ribosome"/>
    <property type="evidence" value="ECO:0007669"/>
    <property type="project" value="UniProtKB-KW"/>
</dbReference>
<dbReference type="GO" id="GO:0019843">
    <property type="term" value="F:rRNA binding"/>
    <property type="evidence" value="ECO:0007669"/>
    <property type="project" value="UniProtKB-UniRule"/>
</dbReference>
<dbReference type="GO" id="GO:0003735">
    <property type="term" value="F:structural constituent of ribosome"/>
    <property type="evidence" value="ECO:0007669"/>
    <property type="project" value="InterPro"/>
</dbReference>
<dbReference type="GO" id="GO:0000027">
    <property type="term" value="P:ribosomal large subunit assembly"/>
    <property type="evidence" value="ECO:0007669"/>
    <property type="project" value="UniProtKB-UniRule"/>
</dbReference>
<dbReference type="GO" id="GO:0006412">
    <property type="term" value="P:translation"/>
    <property type="evidence" value="ECO:0007669"/>
    <property type="project" value="InterPro"/>
</dbReference>
<dbReference type="CDD" id="cd07026">
    <property type="entry name" value="Ribosomal_L20"/>
    <property type="match status" value="1"/>
</dbReference>
<dbReference type="FunFam" id="1.10.1900.20:FF:000001">
    <property type="entry name" value="50S ribosomal protein L20"/>
    <property type="match status" value="1"/>
</dbReference>
<dbReference type="Gene3D" id="6.10.160.10">
    <property type="match status" value="1"/>
</dbReference>
<dbReference type="Gene3D" id="1.10.1900.20">
    <property type="entry name" value="Ribosomal protein L20"/>
    <property type="match status" value="1"/>
</dbReference>
<dbReference type="HAMAP" id="MF_00382">
    <property type="entry name" value="Ribosomal_bL20"/>
    <property type="match status" value="1"/>
</dbReference>
<dbReference type="InterPro" id="IPR005813">
    <property type="entry name" value="Ribosomal_bL20"/>
</dbReference>
<dbReference type="InterPro" id="IPR049946">
    <property type="entry name" value="RIBOSOMAL_L20_CS"/>
</dbReference>
<dbReference type="InterPro" id="IPR035566">
    <property type="entry name" value="Ribosomal_protein_bL20_C"/>
</dbReference>
<dbReference type="NCBIfam" id="TIGR01032">
    <property type="entry name" value="rplT_bact"/>
    <property type="match status" value="1"/>
</dbReference>
<dbReference type="PANTHER" id="PTHR10986">
    <property type="entry name" value="39S RIBOSOMAL PROTEIN L20"/>
    <property type="match status" value="1"/>
</dbReference>
<dbReference type="Pfam" id="PF00453">
    <property type="entry name" value="Ribosomal_L20"/>
    <property type="match status" value="1"/>
</dbReference>
<dbReference type="PRINTS" id="PR00062">
    <property type="entry name" value="RIBOSOMALL20"/>
</dbReference>
<dbReference type="SUPFAM" id="SSF74731">
    <property type="entry name" value="Ribosomal protein L20"/>
    <property type="match status" value="1"/>
</dbReference>
<dbReference type="PROSITE" id="PS00937">
    <property type="entry name" value="RIBOSOMAL_L20"/>
    <property type="match status" value="1"/>
</dbReference>
<organism>
    <name type="scientific">Salmonella schwarzengrund (strain CVM19633)</name>
    <dbReference type="NCBI Taxonomy" id="439843"/>
    <lineage>
        <taxon>Bacteria</taxon>
        <taxon>Pseudomonadati</taxon>
        <taxon>Pseudomonadota</taxon>
        <taxon>Gammaproteobacteria</taxon>
        <taxon>Enterobacterales</taxon>
        <taxon>Enterobacteriaceae</taxon>
        <taxon>Salmonella</taxon>
    </lineage>
</organism>
<keyword id="KW-0687">Ribonucleoprotein</keyword>
<keyword id="KW-0689">Ribosomal protein</keyword>
<keyword id="KW-0694">RNA-binding</keyword>
<keyword id="KW-0699">rRNA-binding</keyword>
<sequence>MARVKRGVIARARHKKILKQAKGYYGARSRVYRVAFQAVIKAGQYAYRDRRQRKRQFRQLWIARINAAARQNGISYSKFINGLKKASVEIDRKILADIAVFDKVAFTALVEKAKAALA</sequence>
<proteinExistence type="inferred from homology"/>
<protein>
    <recommendedName>
        <fullName evidence="1">Large ribosomal subunit protein bL20</fullName>
    </recommendedName>
    <alternativeName>
        <fullName evidence="2">50S ribosomal protein L20</fullName>
    </alternativeName>
</protein>
<evidence type="ECO:0000255" key="1">
    <source>
        <dbReference type="HAMAP-Rule" id="MF_00382"/>
    </source>
</evidence>
<evidence type="ECO:0000305" key="2"/>
<name>RL20_SALSV</name>